<feature type="chain" id="PRO_0000175684" description="Holo-[acyl-carrier-protein] synthase">
    <location>
        <begin position="1"/>
        <end position="126"/>
    </location>
</feature>
<feature type="binding site" evidence="1">
    <location>
        <position position="9"/>
    </location>
    <ligand>
        <name>Mg(2+)</name>
        <dbReference type="ChEBI" id="CHEBI:18420"/>
    </ligand>
</feature>
<feature type="binding site" evidence="1">
    <location>
        <position position="58"/>
    </location>
    <ligand>
        <name>Mg(2+)</name>
        <dbReference type="ChEBI" id="CHEBI:18420"/>
    </ligand>
</feature>
<gene>
    <name evidence="1" type="primary">acpS</name>
    <name type="ordered locus">plu3336</name>
</gene>
<evidence type="ECO:0000255" key="1">
    <source>
        <dbReference type="HAMAP-Rule" id="MF_00101"/>
    </source>
</evidence>
<keyword id="KW-0963">Cytoplasm</keyword>
<keyword id="KW-0275">Fatty acid biosynthesis</keyword>
<keyword id="KW-0276">Fatty acid metabolism</keyword>
<keyword id="KW-0444">Lipid biosynthesis</keyword>
<keyword id="KW-0443">Lipid metabolism</keyword>
<keyword id="KW-0460">Magnesium</keyword>
<keyword id="KW-0479">Metal-binding</keyword>
<keyword id="KW-1185">Reference proteome</keyword>
<keyword id="KW-0808">Transferase</keyword>
<organism>
    <name type="scientific">Photorhabdus laumondii subsp. laumondii (strain DSM 15139 / CIP 105565 / TT01)</name>
    <name type="common">Photorhabdus luminescens subsp. laumondii</name>
    <dbReference type="NCBI Taxonomy" id="243265"/>
    <lineage>
        <taxon>Bacteria</taxon>
        <taxon>Pseudomonadati</taxon>
        <taxon>Pseudomonadota</taxon>
        <taxon>Gammaproteobacteria</taxon>
        <taxon>Enterobacterales</taxon>
        <taxon>Morganellaceae</taxon>
        <taxon>Photorhabdus</taxon>
    </lineage>
</organism>
<name>ACPS_PHOLL</name>
<sequence>MAIIGLGTDIVEIARIEGVVERSGERLAKRILSELEWEQYQQHEKPVRFLAKRFAVKEAAAKALGTGIRNGLAFNQFEVVNDALGKPILRLYGAAAALAQQLGATSLHVTLADERRYACATVILER</sequence>
<dbReference type="EC" id="2.7.8.7" evidence="1"/>
<dbReference type="EMBL" id="BX571870">
    <property type="protein sequence ID" value="CAE15710.1"/>
    <property type="molecule type" value="Genomic_DNA"/>
</dbReference>
<dbReference type="RefSeq" id="WP_011147524.1">
    <property type="nucleotide sequence ID" value="NC_005126.1"/>
</dbReference>
<dbReference type="SMR" id="Q7N1X9"/>
<dbReference type="STRING" id="243265.plu3336"/>
<dbReference type="GeneID" id="48849589"/>
<dbReference type="KEGG" id="plu:plu3336"/>
<dbReference type="eggNOG" id="COG0736">
    <property type="taxonomic scope" value="Bacteria"/>
</dbReference>
<dbReference type="HOGENOM" id="CLU_089696_3_1_6"/>
<dbReference type="OrthoDB" id="517356at2"/>
<dbReference type="Proteomes" id="UP000002514">
    <property type="component" value="Chromosome"/>
</dbReference>
<dbReference type="GO" id="GO:0005737">
    <property type="term" value="C:cytoplasm"/>
    <property type="evidence" value="ECO:0007669"/>
    <property type="project" value="UniProtKB-SubCell"/>
</dbReference>
<dbReference type="GO" id="GO:0008897">
    <property type="term" value="F:holo-[acyl-carrier-protein] synthase activity"/>
    <property type="evidence" value="ECO:0007669"/>
    <property type="project" value="UniProtKB-UniRule"/>
</dbReference>
<dbReference type="GO" id="GO:0000287">
    <property type="term" value="F:magnesium ion binding"/>
    <property type="evidence" value="ECO:0007669"/>
    <property type="project" value="UniProtKB-UniRule"/>
</dbReference>
<dbReference type="GO" id="GO:0006633">
    <property type="term" value="P:fatty acid biosynthetic process"/>
    <property type="evidence" value="ECO:0007669"/>
    <property type="project" value="UniProtKB-UniRule"/>
</dbReference>
<dbReference type="FunFam" id="3.90.470.20:FF:000001">
    <property type="entry name" value="Holo-[acyl-carrier-protein] synthase"/>
    <property type="match status" value="1"/>
</dbReference>
<dbReference type="Gene3D" id="3.90.470.20">
    <property type="entry name" value="4'-phosphopantetheinyl transferase domain"/>
    <property type="match status" value="1"/>
</dbReference>
<dbReference type="HAMAP" id="MF_00101">
    <property type="entry name" value="AcpS"/>
    <property type="match status" value="1"/>
</dbReference>
<dbReference type="InterPro" id="IPR008278">
    <property type="entry name" value="4-PPantetheinyl_Trfase_dom"/>
</dbReference>
<dbReference type="InterPro" id="IPR037143">
    <property type="entry name" value="4-PPantetheinyl_Trfase_dom_sf"/>
</dbReference>
<dbReference type="InterPro" id="IPR002582">
    <property type="entry name" value="ACPS"/>
</dbReference>
<dbReference type="InterPro" id="IPR004568">
    <property type="entry name" value="Ppantetheine-prot_Trfase_dom"/>
</dbReference>
<dbReference type="NCBIfam" id="TIGR00516">
    <property type="entry name" value="acpS"/>
    <property type="match status" value="1"/>
</dbReference>
<dbReference type="NCBIfam" id="TIGR00556">
    <property type="entry name" value="pantethn_trn"/>
    <property type="match status" value="1"/>
</dbReference>
<dbReference type="Pfam" id="PF01648">
    <property type="entry name" value="ACPS"/>
    <property type="match status" value="1"/>
</dbReference>
<dbReference type="SUPFAM" id="SSF56214">
    <property type="entry name" value="4'-phosphopantetheinyl transferase"/>
    <property type="match status" value="1"/>
</dbReference>
<accession>Q7N1X9</accession>
<proteinExistence type="inferred from homology"/>
<protein>
    <recommendedName>
        <fullName evidence="1">Holo-[acyl-carrier-protein] synthase</fullName>
        <shortName evidence="1">Holo-ACP synthase</shortName>
        <ecNumber evidence="1">2.7.8.7</ecNumber>
    </recommendedName>
    <alternativeName>
        <fullName evidence="1">4'-phosphopantetheinyl transferase AcpS</fullName>
    </alternativeName>
</protein>
<reference key="1">
    <citation type="journal article" date="2003" name="Nat. Biotechnol.">
        <title>The genome sequence of the entomopathogenic bacterium Photorhabdus luminescens.</title>
        <authorList>
            <person name="Duchaud E."/>
            <person name="Rusniok C."/>
            <person name="Frangeul L."/>
            <person name="Buchrieser C."/>
            <person name="Givaudan A."/>
            <person name="Taourit S."/>
            <person name="Bocs S."/>
            <person name="Boursaux-Eude C."/>
            <person name="Chandler M."/>
            <person name="Charles J.-F."/>
            <person name="Dassa E."/>
            <person name="Derose R."/>
            <person name="Derzelle S."/>
            <person name="Freyssinet G."/>
            <person name="Gaudriault S."/>
            <person name="Medigue C."/>
            <person name="Lanois A."/>
            <person name="Powell K."/>
            <person name="Siguier P."/>
            <person name="Vincent R."/>
            <person name="Wingate V."/>
            <person name="Zouine M."/>
            <person name="Glaser P."/>
            <person name="Boemare N."/>
            <person name="Danchin A."/>
            <person name="Kunst F."/>
        </authorList>
    </citation>
    <scope>NUCLEOTIDE SEQUENCE [LARGE SCALE GENOMIC DNA]</scope>
    <source>
        <strain>DSM 15139 / CIP 105565 / TT01</strain>
    </source>
</reference>
<comment type="function">
    <text evidence="1">Transfers the 4'-phosphopantetheine moiety from coenzyme A to a Ser of acyl-carrier-protein.</text>
</comment>
<comment type="catalytic activity">
    <reaction evidence="1">
        <text>apo-[ACP] + CoA = holo-[ACP] + adenosine 3',5'-bisphosphate + H(+)</text>
        <dbReference type="Rhea" id="RHEA:12068"/>
        <dbReference type="Rhea" id="RHEA-COMP:9685"/>
        <dbReference type="Rhea" id="RHEA-COMP:9690"/>
        <dbReference type="ChEBI" id="CHEBI:15378"/>
        <dbReference type="ChEBI" id="CHEBI:29999"/>
        <dbReference type="ChEBI" id="CHEBI:57287"/>
        <dbReference type="ChEBI" id="CHEBI:58343"/>
        <dbReference type="ChEBI" id="CHEBI:64479"/>
        <dbReference type="EC" id="2.7.8.7"/>
    </reaction>
</comment>
<comment type="cofactor">
    <cofactor evidence="1">
        <name>Mg(2+)</name>
        <dbReference type="ChEBI" id="CHEBI:18420"/>
    </cofactor>
</comment>
<comment type="subcellular location">
    <subcellularLocation>
        <location evidence="1">Cytoplasm</location>
    </subcellularLocation>
</comment>
<comment type="similarity">
    <text evidence="1">Belongs to the P-Pant transferase superfamily. AcpS family.</text>
</comment>